<proteinExistence type="inferred from homology"/>
<comment type="function">
    <text evidence="1">One of the components of the core complex of photosystem II (PSII). PSII is a light-driven water:plastoquinone oxidoreductase that uses light energy to abstract electrons from H(2)O, generating O(2) and a proton gradient subsequently used for ATP formation. It consists of a core antenna complex that captures photons, and an electron transfer chain that converts photonic excitation into a charge separation.</text>
</comment>
<comment type="subunit">
    <text evidence="1">PSII is composed of 1 copy each of membrane proteins PsbA, PsbB, PsbC, PsbD, PsbE, PsbF, PsbH, PsbI, PsbJ, PsbK, PsbL, PsbM, PsbT, PsbX, PsbY, PsbZ, Psb30/Ycf12, at least 3 peripheral proteins of the oxygen-evolving complex and a large number of cofactors. It forms dimeric complexes.</text>
</comment>
<comment type="subcellular location">
    <subcellularLocation>
        <location evidence="1">Plastid</location>
        <location evidence="1">Chloroplast thylakoid membrane</location>
        <topology evidence="1">Single-pass membrane protein</topology>
    </subcellularLocation>
</comment>
<comment type="similarity">
    <text evidence="1">Belongs to the PsbK family.</text>
</comment>
<gene>
    <name evidence="1" type="primary">psbK</name>
    <name type="ORF">LSC003</name>
</gene>
<feature type="propeptide" id="PRO_0000029479" evidence="1">
    <location>
        <begin position="1"/>
        <end position="22"/>
    </location>
</feature>
<feature type="chain" id="PRO_0000029480" description="Photosystem II reaction center protein K" evidence="1">
    <location>
        <begin position="23"/>
        <end position="59"/>
    </location>
</feature>
<feature type="transmembrane region" description="Helical" evidence="1">
    <location>
        <begin position="38"/>
        <end position="58"/>
    </location>
</feature>
<reference key="1">
    <citation type="journal article" date="2005" name="Mol. Biol. Evol.">
        <title>Two chloroplast DNA inversions originated simultaneously during the early evolution of the sunflower family (Asteraceae).</title>
        <authorList>
            <person name="Kim K.-J."/>
            <person name="Choi K.-S."/>
            <person name="Jansen R.K."/>
        </authorList>
    </citation>
    <scope>NUCLEOTIDE SEQUENCE [GENOMIC DNA]</scope>
</reference>
<reference key="2">
    <citation type="journal article" date="2006" name="Transgenic Res.">
        <title>Efficient and stable transformation of Lactuca sativa L. cv. Cisco (lettuce) plastids.</title>
        <authorList>
            <person name="Kanamoto H."/>
            <person name="Yamashita A."/>
            <person name="Asao H."/>
            <person name="Okumura S."/>
            <person name="Takase H."/>
            <person name="Hattori M."/>
            <person name="Yokota A."/>
            <person name="Tomizawa K."/>
        </authorList>
    </citation>
    <scope>NUCLEOTIDE SEQUENCE [LARGE SCALE GENOMIC DNA]</scope>
    <source>
        <strain>cv. Cisco</strain>
    </source>
</reference>
<reference key="3">
    <citation type="submission" date="2006-01" db="EMBL/GenBank/DDBJ databases">
        <title>A comparison of the first two published chloroplast genomes in Asteraceae: Lactuca and Helianthus.</title>
        <authorList>
            <person name="Timme R.E."/>
            <person name="Kuehl J.V."/>
            <person name="Boore J.L."/>
            <person name="Jansen R.K."/>
        </authorList>
    </citation>
    <scope>NUCLEOTIDE SEQUENCE [LARGE SCALE GENOMIC DNA]</scope>
    <source>
        <strain>cv. Salinas</strain>
    </source>
</reference>
<organism>
    <name type="scientific">Lactuca sativa</name>
    <name type="common">Garden lettuce</name>
    <dbReference type="NCBI Taxonomy" id="4236"/>
    <lineage>
        <taxon>Eukaryota</taxon>
        <taxon>Viridiplantae</taxon>
        <taxon>Streptophyta</taxon>
        <taxon>Embryophyta</taxon>
        <taxon>Tracheophyta</taxon>
        <taxon>Spermatophyta</taxon>
        <taxon>Magnoliopsida</taxon>
        <taxon>eudicotyledons</taxon>
        <taxon>Gunneridae</taxon>
        <taxon>Pentapetalae</taxon>
        <taxon>asterids</taxon>
        <taxon>campanulids</taxon>
        <taxon>Asterales</taxon>
        <taxon>Asteraceae</taxon>
        <taxon>Cichorioideae</taxon>
        <taxon>Cichorieae</taxon>
        <taxon>Lactucinae</taxon>
        <taxon>Lactuca</taxon>
    </lineage>
</organism>
<sequence>MLNIFSLICLNSALYPSSLFFAKLPEAYAFLNPIVDVMPVIPLFFFLLAFVWQAAVSFR</sequence>
<dbReference type="EMBL" id="AY865171">
    <property type="protein sequence ID" value="AAX58138.1"/>
    <property type="molecule type" value="Genomic_DNA"/>
</dbReference>
<dbReference type="EMBL" id="AP007232">
    <property type="protein sequence ID" value="BAE47577.1"/>
    <property type="molecule type" value="Genomic_DNA"/>
</dbReference>
<dbReference type="EMBL" id="DQ383816">
    <property type="protein sequence ID" value="ABD47216.1"/>
    <property type="molecule type" value="Genomic_DNA"/>
</dbReference>
<dbReference type="RefSeq" id="YP_398312.1">
    <property type="nucleotide sequence ID" value="NC_007578.1"/>
</dbReference>
<dbReference type="SMR" id="Q56P17"/>
<dbReference type="GeneID" id="3772791"/>
<dbReference type="KEGG" id="lsv:3772791"/>
<dbReference type="OrthoDB" id="1673137at2759"/>
<dbReference type="GO" id="GO:0009535">
    <property type="term" value="C:chloroplast thylakoid membrane"/>
    <property type="evidence" value="ECO:0007669"/>
    <property type="project" value="UniProtKB-SubCell"/>
</dbReference>
<dbReference type="GO" id="GO:0009539">
    <property type="term" value="C:photosystem II reaction center"/>
    <property type="evidence" value="ECO:0007669"/>
    <property type="project" value="InterPro"/>
</dbReference>
<dbReference type="GO" id="GO:0015979">
    <property type="term" value="P:photosynthesis"/>
    <property type="evidence" value="ECO:0007669"/>
    <property type="project" value="UniProtKB-UniRule"/>
</dbReference>
<dbReference type="HAMAP" id="MF_00441">
    <property type="entry name" value="PSII_PsbK"/>
    <property type="match status" value="1"/>
</dbReference>
<dbReference type="InterPro" id="IPR003687">
    <property type="entry name" value="PSII_PsbK"/>
</dbReference>
<dbReference type="InterPro" id="IPR037270">
    <property type="entry name" value="PSII_PsbK_sf"/>
</dbReference>
<dbReference type="NCBIfam" id="NF002715">
    <property type="entry name" value="PRK02553.1"/>
    <property type="match status" value="1"/>
</dbReference>
<dbReference type="PANTHER" id="PTHR35325">
    <property type="match status" value="1"/>
</dbReference>
<dbReference type="PANTHER" id="PTHR35325:SF1">
    <property type="entry name" value="PHOTOSYSTEM II REACTION CENTER PROTEIN K"/>
    <property type="match status" value="1"/>
</dbReference>
<dbReference type="Pfam" id="PF02533">
    <property type="entry name" value="PsbK"/>
    <property type="match status" value="1"/>
</dbReference>
<dbReference type="SUPFAM" id="SSF161037">
    <property type="entry name" value="Photosystem II reaction center protein K, PsbK"/>
    <property type="match status" value="1"/>
</dbReference>
<protein>
    <recommendedName>
        <fullName evidence="1">Photosystem II reaction center protein K</fullName>
        <shortName evidence="1">PSII-K</shortName>
    </recommendedName>
</protein>
<geneLocation type="chloroplast"/>
<accession>Q56P17</accession>
<accession>Q1KXN9</accession>
<accession>Q332Z5</accession>
<evidence type="ECO:0000255" key="1">
    <source>
        <dbReference type="HAMAP-Rule" id="MF_00441"/>
    </source>
</evidence>
<keyword id="KW-0150">Chloroplast</keyword>
<keyword id="KW-0472">Membrane</keyword>
<keyword id="KW-0602">Photosynthesis</keyword>
<keyword id="KW-0604">Photosystem II</keyword>
<keyword id="KW-0934">Plastid</keyword>
<keyword id="KW-0674">Reaction center</keyword>
<keyword id="KW-0793">Thylakoid</keyword>
<keyword id="KW-0812">Transmembrane</keyword>
<keyword id="KW-1133">Transmembrane helix</keyword>
<name>PSBK_LACSA</name>